<feature type="chain" id="PRO_1000047545" description="Glutamate racemase">
    <location>
        <begin position="1"/>
        <end position="271"/>
    </location>
</feature>
<feature type="active site" description="Proton donor/acceptor" evidence="1">
    <location>
        <position position="74"/>
    </location>
</feature>
<feature type="active site" description="Proton donor/acceptor" evidence="1">
    <location>
        <position position="189"/>
    </location>
</feature>
<feature type="binding site" evidence="1">
    <location>
        <begin position="10"/>
        <end position="11"/>
    </location>
    <ligand>
        <name>substrate</name>
    </ligand>
</feature>
<feature type="binding site" evidence="1">
    <location>
        <begin position="42"/>
        <end position="43"/>
    </location>
    <ligand>
        <name>substrate</name>
    </ligand>
</feature>
<feature type="binding site" evidence="1">
    <location>
        <begin position="75"/>
        <end position="76"/>
    </location>
    <ligand>
        <name>substrate</name>
    </ligand>
</feature>
<feature type="binding site" evidence="1">
    <location>
        <begin position="190"/>
        <end position="191"/>
    </location>
    <ligand>
        <name>substrate</name>
    </ligand>
</feature>
<dbReference type="EC" id="5.1.1.3" evidence="1"/>
<dbReference type="EMBL" id="CP000524">
    <property type="protein sequence ID" value="ABM45352.1"/>
    <property type="molecule type" value="Genomic_DNA"/>
</dbReference>
<dbReference type="RefSeq" id="WP_005767169.1">
    <property type="nucleotide sequence ID" value="NC_008783.1"/>
</dbReference>
<dbReference type="SMR" id="A1UT12"/>
<dbReference type="STRING" id="360095.BARBAKC583_0827"/>
<dbReference type="GeneID" id="4684317"/>
<dbReference type="KEGG" id="bbk:BARBAKC583_0827"/>
<dbReference type="PATRIC" id="fig|360095.6.peg.803"/>
<dbReference type="eggNOG" id="COG0796">
    <property type="taxonomic scope" value="Bacteria"/>
</dbReference>
<dbReference type="HOGENOM" id="CLU_052344_2_0_5"/>
<dbReference type="OrthoDB" id="9801055at2"/>
<dbReference type="UniPathway" id="UPA00219"/>
<dbReference type="Proteomes" id="UP000000643">
    <property type="component" value="Chromosome"/>
</dbReference>
<dbReference type="GO" id="GO:0008881">
    <property type="term" value="F:glutamate racemase activity"/>
    <property type="evidence" value="ECO:0007669"/>
    <property type="project" value="UniProtKB-UniRule"/>
</dbReference>
<dbReference type="GO" id="GO:0071555">
    <property type="term" value="P:cell wall organization"/>
    <property type="evidence" value="ECO:0007669"/>
    <property type="project" value="UniProtKB-KW"/>
</dbReference>
<dbReference type="GO" id="GO:0009252">
    <property type="term" value="P:peptidoglycan biosynthetic process"/>
    <property type="evidence" value="ECO:0007669"/>
    <property type="project" value="UniProtKB-UniRule"/>
</dbReference>
<dbReference type="GO" id="GO:0008360">
    <property type="term" value="P:regulation of cell shape"/>
    <property type="evidence" value="ECO:0007669"/>
    <property type="project" value="UniProtKB-KW"/>
</dbReference>
<dbReference type="Gene3D" id="3.40.50.1860">
    <property type="match status" value="2"/>
</dbReference>
<dbReference type="HAMAP" id="MF_00258">
    <property type="entry name" value="Glu_racemase"/>
    <property type="match status" value="1"/>
</dbReference>
<dbReference type="InterPro" id="IPR015942">
    <property type="entry name" value="Asp/Glu/hydantoin_racemase"/>
</dbReference>
<dbReference type="InterPro" id="IPR001920">
    <property type="entry name" value="Asp/Glu_race"/>
</dbReference>
<dbReference type="InterPro" id="IPR018187">
    <property type="entry name" value="Asp/Glu_racemase_AS_1"/>
</dbReference>
<dbReference type="InterPro" id="IPR033134">
    <property type="entry name" value="Asp/Glu_racemase_AS_2"/>
</dbReference>
<dbReference type="InterPro" id="IPR004391">
    <property type="entry name" value="Glu_race"/>
</dbReference>
<dbReference type="NCBIfam" id="TIGR00067">
    <property type="entry name" value="glut_race"/>
    <property type="match status" value="1"/>
</dbReference>
<dbReference type="PANTHER" id="PTHR21198">
    <property type="entry name" value="GLUTAMATE RACEMASE"/>
    <property type="match status" value="1"/>
</dbReference>
<dbReference type="PANTHER" id="PTHR21198:SF2">
    <property type="entry name" value="GLUTAMATE RACEMASE"/>
    <property type="match status" value="1"/>
</dbReference>
<dbReference type="Pfam" id="PF01177">
    <property type="entry name" value="Asp_Glu_race"/>
    <property type="match status" value="1"/>
</dbReference>
<dbReference type="SUPFAM" id="SSF53681">
    <property type="entry name" value="Aspartate/glutamate racemase"/>
    <property type="match status" value="2"/>
</dbReference>
<dbReference type="PROSITE" id="PS00923">
    <property type="entry name" value="ASP_GLU_RACEMASE_1"/>
    <property type="match status" value="1"/>
</dbReference>
<dbReference type="PROSITE" id="PS00924">
    <property type="entry name" value="ASP_GLU_RACEMASE_2"/>
    <property type="match status" value="1"/>
</dbReference>
<evidence type="ECO:0000255" key="1">
    <source>
        <dbReference type="HAMAP-Rule" id="MF_00258"/>
    </source>
</evidence>
<gene>
    <name evidence="1" type="primary">murI</name>
    <name type="ordered locus">BARBAKC583_0827</name>
</gene>
<name>MURI_BARBK</name>
<sequence length="271" mass="30437">MSEKPVIFFDSGIGGLTVLKEARILIPELQFVYVADDAGFPYGAWEEDVLKGRILKVFTNLLKLYTPALCVIACNTASTLMISDLRQEFPHIPFVGTVPAIKSAAAQTKSGLISVLATPGTVKRAYTHELISSFANQCHVELVGSKKLATFAENYLRGYPIDYEELRHEILPCFVEKNGKYTDVIVLACTHYPFLISLFHKQALWSVNWIDPAKAIARHTRSLLLETMKNKSSKKNIKNYALFTSQNIDFVTERLLQRFNLNIMKGVDFGV</sequence>
<comment type="function">
    <text evidence="1">Provides the (R)-glutamate required for cell wall biosynthesis.</text>
</comment>
<comment type="catalytic activity">
    <reaction evidence="1">
        <text>L-glutamate = D-glutamate</text>
        <dbReference type="Rhea" id="RHEA:12813"/>
        <dbReference type="ChEBI" id="CHEBI:29985"/>
        <dbReference type="ChEBI" id="CHEBI:29986"/>
        <dbReference type="EC" id="5.1.1.3"/>
    </reaction>
</comment>
<comment type="pathway">
    <text evidence="1">Cell wall biogenesis; peptidoglycan biosynthesis.</text>
</comment>
<comment type="similarity">
    <text evidence="1">Belongs to the aspartate/glutamate racemases family.</text>
</comment>
<keyword id="KW-0133">Cell shape</keyword>
<keyword id="KW-0961">Cell wall biogenesis/degradation</keyword>
<keyword id="KW-0413">Isomerase</keyword>
<keyword id="KW-0573">Peptidoglycan synthesis</keyword>
<proteinExistence type="inferred from homology"/>
<reference key="1">
    <citation type="submission" date="2006-12" db="EMBL/GenBank/DDBJ databases">
        <authorList>
            <person name="Hendrix L."/>
            <person name="Mohamoud Y."/>
            <person name="Radune D."/>
            <person name="Shvartsbeyn A."/>
            <person name="Daugherty S."/>
            <person name="Dodson R."/>
            <person name="Durkin A.S."/>
            <person name="Harkins D."/>
            <person name="Huot H."/>
            <person name="Kothari S.P."/>
            <person name="Madupu R."/>
            <person name="Li J."/>
            <person name="Nelson W.C."/>
            <person name="Shrivastava S."/>
            <person name="Giglio M.G."/>
            <person name="Haft D."/>
            <person name="Selengut J."/>
            <person name="Fraser-Ligget C."/>
            <person name="Seshadri R."/>
        </authorList>
    </citation>
    <scope>NUCLEOTIDE SEQUENCE [LARGE SCALE GENOMIC DNA]</scope>
    <source>
        <strain>ATCC 35685 / KC583 / Herrer 020/F12,63</strain>
    </source>
</reference>
<protein>
    <recommendedName>
        <fullName evidence="1">Glutamate racemase</fullName>
        <ecNumber evidence="1">5.1.1.3</ecNumber>
    </recommendedName>
</protein>
<organism>
    <name type="scientific">Bartonella bacilliformis (strain ATCC 35685 / KC583 / Herrer 020/F12,63)</name>
    <dbReference type="NCBI Taxonomy" id="360095"/>
    <lineage>
        <taxon>Bacteria</taxon>
        <taxon>Pseudomonadati</taxon>
        <taxon>Pseudomonadota</taxon>
        <taxon>Alphaproteobacteria</taxon>
        <taxon>Hyphomicrobiales</taxon>
        <taxon>Bartonellaceae</taxon>
        <taxon>Bartonella</taxon>
    </lineage>
</organism>
<accession>A1UT12</accession>